<name>FDXN_RHILT</name>
<evidence type="ECO:0000250" key="1"/>
<evidence type="ECO:0000255" key="2">
    <source>
        <dbReference type="PROSITE-ProRule" id="PRU00711"/>
    </source>
</evidence>
<evidence type="ECO:0000305" key="3"/>
<proteinExistence type="predicted"/>
<sequence>MAFKIIASQCTQCGACEFECPSGAISFKTDRFVVDPKICTECRIEFDAPKCRAICPMPNTCVPA</sequence>
<protein>
    <recommendedName>
        <fullName>Ferredoxin-like protein in nif region</fullName>
    </recommendedName>
</protein>
<geneLocation type="plasmid">
    <name>sym pRtr843e</name>
</geneLocation>
<reference key="1">
    <citation type="journal article" date="1989" name="Mol. Microbiol.">
        <title>Molecular linkage of the nif/fix and nod gene regions in Rhizobium leguminosarum biovar trifolii.</title>
        <authorList>
            <person name="Iismaa S.E."/>
            <person name="Ealing P.M."/>
            <person name="Scott K.F."/>
            <person name="Watson J.M."/>
        </authorList>
    </citation>
    <scope>NUCLEOTIDE SEQUENCE [GENOMIC DNA]</scope>
    <source>
        <strain>ANU 843</strain>
    </source>
</reference>
<accession>P42711</accession>
<gene>
    <name type="primary">fdxN</name>
</gene>
<feature type="chain" id="PRO_0000159167" description="Ferredoxin-like protein in nif region">
    <location>
        <begin position="1"/>
        <end position="64"/>
    </location>
</feature>
<feature type="domain" description="4Fe-4S ferredoxin-type" evidence="2">
    <location>
        <begin position="2"/>
        <end position="30"/>
    </location>
</feature>
<feature type="binding site" evidence="1">
    <location>
        <position position="10"/>
    </location>
    <ligand>
        <name>[4Fe-4S] cluster</name>
        <dbReference type="ChEBI" id="CHEBI:49883"/>
        <label>1</label>
    </ligand>
</feature>
<feature type="binding site" evidence="1">
    <location>
        <position position="13"/>
    </location>
    <ligand>
        <name>[4Fe-4S] cluster</name>
        <dbReference type="ChEBI" id="CHEBI:49883"/>
        <label>1</label>
    </ligand>
</feature>
<feature type="binding site" evidence="1">
    <location>
        <position position="16"/>
    </location>
    <ligand>
        <name>[4Fe-4S] cluster</name>
        <dbReference type="ChEBI" id="CHEBI:49883"/>
        <label>1</label>
    </ligand>
</feature>
<feature type="binding site" evidence="1">
    <location>
        <position position="20"/>
    </location>
    <ligand>
        <name>[4Fe-4S] cluster</name>
        <dbReference type="ChEBI" id="CHEBI:49883"/>
        <label>2</label>
    </ligand>
</feature>
<feature type="binding site" evidence="1">
    <location>
        <position position="39"/>
    </location>
    <ligand>
        <name>[4Fe-4S] cluster</name>
        <dbReference type="ChEBI" id="CHEBI:49883"/>
        <label>2</label>
    </ligand>
</feature>
<feature type="binding site" evidence="1">
    <location>
        <position position="42"/>
    </location>
    <ligand>
        <name>[4Fe-4S] cluster</name>
        <dbReference type="ChEBI" id="CHEBI:49883"/>
        <label>2</label>
    </ligand>
</feature>
<feature type="binding site" evidence="1">
    <location>
        <position position="51"/>
    </location>
    <ligand>
        <name>[4Fe-4S] cluster</name>
        <dbReference type="ChEBI" id="CHEBI:49883"/>
        <label>2</label>
    </ligand>
</feature>
<feature type="binding site" evidence="1">
    <location>
        <position position="55"/>
    </location>
    <ligand>
        <name>[4Fe-4S] cluster</name>
        <dbReference type="ChEBI" id="CHEBI:49883"/>
        <label>1</label>
    </ligand>
</feature>
<comment type="cofactor">
    <cofactor evidence="3">
        <name>[4Fe-4S] cluster</name>
        <dbReference type="ChEBI" id="CHEBI:49883"/>
    </cofactor>
    <text evidence="3">Binds 2 [4Fe-4S] clusters.</text>
</comment>
<organism>
    <name type="scientific">Rhizobium leguminosarum bv. trifolii</name>
    <dbReference type="NCBI Taxonomy" id="386"/>
    <lineage>
        <taxon>Bacteria</taxon>
        <taxon>Pseudomonadati</taxon>
        <taxon>Pseudomonadota</taxon>
        <taxon>Alphaproteobacteria</taxon>
        <taxon>Hyphomicrobiales</taxon>
        <taxon>Rhizobiaceae</taxon>
        <taxon>Rhizobium/Agrobacterium group</taxon>
        <taxon>Rhizobium</taxon>
    </lineage>
</organism>
<dbReference type="EMBL" id="X51963">
    <property type="protein sequence ID" value="CAB37406.1"/>
    <property type="molecule type" value="Genomic_DNA"/>
</dbReference>
<dbReference type="PIR" id="S09280">
    <property type="entry name" value="S09280"/>
</dbReference>
<dbReference type="SMR" id="P42711"/>
<dbReference type="GO" id="GO:0051539">
    <property type="term" value="F:4 iron, 4 sulfur cluster binding"/>
    <property type="evidence" value="ECO:0007669"/>
    <property type="project" value="UniProtKB-KW"/>
</dbReference>
<dbReference type="GO" id="GO:0046872">
    <property type="term" value="F:metal ion binding"/>
    <property type="evidence" value="ECO:0007669"/>
    <property type="project" value="UniProtKB-KW"/>
</dbReference>
<dbReference type="GO" id="GO:0009399">
    <property type="term" value="P:nitrogen fixation"/>
    <property type="evidence" value="ECO:0007669"/>
    <property type="project" value="UniProtKB-KW"/>
</dbReference>
<dbReference type="FunFam" id="3.30.70.20:FF:000045">
    <property type="entry name" value="Ferredoxin, 4Fe-4S"/>
    <property type="match status" value="1"/>
</dbReference>
<dbReference type="Gene3D" id="3.30.70.20">
    <property type="match status" value="1"/>
</dbReference>
<dbReference type="InterPro" id="IPR017896">
    <property type="entry name" value="4Fe4S_Fe-S-bd"/>
</dbReference>
<dbReference type="InterPro" id="IPR017900">
    <property type="entry name" value="4Fe4S_Fe_S_CS"/>
</dbReference>
<dbReference type="Pfam" id="PF00037">
    <property type="entry name" value="Fer4"/>
    <property type="match status" value="1"/>
</dbReference>
<dbReference type="SUPFAM" id="SSF54862">
    <property type="entry name" value="4Fe-4S ferredoxins"/>
    <property type="match status" value="1"/>
</dbReference>
<dbReference type="PROSITE" id="PS00198">
    <property type="entry name" value="4FE4S_FER_1"/>
    <property type="match status" value="1"/>
</dbReference>
<dbReference type="PROSITE" id="PS51379">
    <property type="entry name" value="4FE4S_FER_2"/>
    <property type="match status" value="1"/>
</dbReference>
<keyword id="KW-0004">4Fe-4S</keyword>
<keyword id="KW-0249">Electron transport</keyword>
<keyword id="KW-0408">Iron</keyword>
<keyword id="KW-0411">Iron-sulfur</keyword>
<keyword id="KW-0479">Metal-binding</keyword>
<keyword id="KW-0535">Nitrogen fixation</keyword>
<keyword id="KW-0614">Plasmid</keyword>
<keyword id="KW-0677">Repeat</keyword>
<keyword id="KW-0813">Transport</keyword>